<accession>Q9X109</accession>
<comment type="function">
    <text evidence="1">Catalyzes the transfer of an acyl group from acyl-phosphate (acyl-PO(4)) to glycerol-3-phosphate (G3P) to form lysophosphatidic acid (LPA). This enzyme utilizes acyl-phosphate as fatty acyl donor, but not acyl-CoA or acyl-ACP.</text>
</comment>
<comment type="catalytic activity">
    <reaction evidence="1">
        <text>an acyl phosphate + sn-glycerol 3-phosphate = a 1-acyl-sn-glycero-3-phosphate + phosphate</text>
        <dbReference type="Rhea" id="RHEA:34075"/>
        <dbReference type="ChEBI" id="CHEBI:43474"/>
        <dbReference type="ChEBI" id="CHEBI:57597"/>
        <dbReference type="ChEBI" id="CHEBI:57970"/>
        <dbReference type="ChEBI" id="CHEBI:59918"/>
        <dbReference type="EC" id="2.3.1.275"/>
    </reaction>
</comment>
<comment type="pathway">
    <text evidence="1">Lipid metabolism; phospholipid metabolism.</text>
</comment>
<comment type="subunit">
    <text evidence="1">Probably interacts with PlsX.</text>
</comment>
<comment type="subcellular location">
    <subcellularLocation>
        <location evidence="1">Cell inner membrane</location>
        <topology evidence="1">Multi-pass membrane protein</topology>
    </subcellularLocation>
</comment>
<comment type="similarity">
    <text evidence="1">Belongs to the PlsY family.</text>
</comment>
<name>PLSY1_THEMA</name>
<organism>
    <name type="scientific">Thermotoga maritima (strain ATCC 43589 / DSM 3109 / JCM 10099 / NBRC 100826 / MSB8)</name>
    <dbReference type="NCBI Taxonomy" id="243274"/>
    <lineage>
        <taxon>Bacteria</taxon>
        <taxon>Thermotogati</taxon>
        <taxon>Thermotogota</taxon>
        <taxon>Thermotogae</taxon>
        <taxon>Thermotogales</taxon>
        <taxon>Thermotogaceae</taxon>
        <taxon>Thermotoga</taxon>
    </lineage>
</organism>
<proteinExistence type="inferred from homology"/>
<dbReference type="EC" id="2.3.1.275" evidence="1"/>
<dbReference type="EMBL" id="AE000512">
    <property type="protein sequence ID" value="AAD36357.1"/>
    <property type="molecule type" value="Genomic_DNA"/>
</dbReference>
<dbReference type="PIR" id="F72273">
    <property type="entry name" value="F72273"/>
</dbReference>
<dbReference type="RefSeq" id="NP_229087.1">
    <property type="nucleotide sequence ID" value="NC_000853.1"/>
</dbReference>
<dbReference type="SMR" id="Q9X109"/>
<dbReference type="STRING" id="243274.TM_1283"/>
<dbReference type="PaxDb" id="243274-THEMA_07920"/>
<dbReference type="EnsemblBacteria" id="AAD36357">
    <property type="protein sequence ID" value="AAD36357"/>
    <property type="gene ID" value="TM_1283"/>
</dbReference>
<dbReference type="KEGG" id="tma:TM1283"/>
<dbReference type="KEGG" id="tmi:THEMA_07920"/>
<dbReference type="KEGG" id="tmm:Tmari_1289"/>
<dbReference type="KEGG" id="tmw:THMA_1309"/>
<dbReference type="eggNOG" id="COG0344">
    <property type="taxonomic scope" value="Bacteria"/>
</dbReference>
<dbReference type="InParanoid" id="Q9X109"/>
<dbReference type="OrthoDB" id="9777124at2"/>
<dbReference type="UniPathway" id="UPA00085"/>
<dbReference type="Proteomes" id="UP000008183">
    <property type="component" value="Chromosome"/>
</dbReference>
<dbReference type="GO" id="GO:0005886">
    <property type="term" value="C:plasma membrane"/>
    <property type="evidence" value="ECO:0000318"/>
    <property type="project" value="GO_Central"/>
</dbReference>
<dbReference type="GO" id="GO:0043772">
    <property type="term" value="F:acyl-phosphate glycerol-3-phosphate acyltransferase activity"/>
    <property type="evidence" value="ECO:0007669"/>
    <property type="project" value="UniProtKB-UniRule"/>
</dbReference>
<dbReference type="GO" id="GO:0008654">
    <property type="term" value="P:phospholipid biosynthetic process"/>
    <property type="evidence" value="ECO:0007669"/>
    <property type="project" value="UniProtKB-UniRule"/>
</dbReference>
<dbReference type="HAMAP" id="MF_01043">
    <property type="entry name" value="PlsY"/>
    <property type="match status" value="1"/>
</dbReference>
<dbReference type="InterPro" id="IPR003811">
    <property type="entry name" value="G3P_acylTferase_PlsY"/>
</dbReference>
<dbReference type="PANTHER" id="PTHR30309:SF1">
    <property type="entry name" value="GLYCEROL-3-PHOSPHATE ACYLTRANSFERASE 1"/>
    <property type="match status" value="1"/>
</dbReference>
<dbReference type="PANTHER" id="PTHR30309">
    <property type="entry name" value="INNER MEMBRANE PROTEIN YGIH"/>
    <property type="match status" value="1"/>
</dbReference>
<dbReference type="Pfam" id="PF02660">
    <property type="entry name" value="G3P_acyltransf"/>
    <property type="match status" value="1"/>
</dbReference>
<dbReference type="SMART" id="SM01207">
    <property type="entry name" value="G3P_acyltransf"/>
    <property type="match status" value="1"/>
</dbReference>
<protein>
    <recommendedName>
        <fullName evidence="1">Glycerol-3-phosphate acyltransferase 1</fullName>
    </recommendedName>
    <alternativeName>
        <fullName evidence="1">Acyl-PO4 G3P acyltransferase 1</fullName>
    </alternativeName>
    <alternativeName>
        <fullName evidence="1">Acyl-phosphate--glycerol-3-phosphate acyltransferase 1</fullName>
    </alternativeName>
    <alternativeName>
        <fullName evidence="1">G3P acyltransferase 1</fullName>
        <shortName evidence="1">GPAT 1</shortName>
        <ecNumber evidence="1">2.3.1.275</ecNumber>
    </alternativeName>
    <alternativeName>
        <fullName evidence="1">Lysophosphatidic acid synthase 1</fullName>
        <shortName evidence="1">LPA synthase 1</shortName>
    </alternativeName>
</protein>
<feature type="chain" id="PRO_0000188479" description="Glycerol-3-phosphate acyltransferase 1">
    <location>
        <begin position="1"/>
        <end position="203"/>
    </location>
</feature>
<feature type="transmembrane region" description="Helical" evidence="1">
    <location>
        <begin position="2"/>
        <end position="22"/>
    </location>
</feature>
<feature type="transmembrane region" description="Helical" evidence="1">
    <location>
        <begin position="52"/>
        <end position="72"/>
    </location>
</feature>
<feature type="transmembrane region" description="Helical" evidence="1">
    <location>
        <begin position="82"/>
        <end position="102"/>
    </location>
</feature>
<feature type="transmembrane region" description="Helical" evidence="1">
    <location>
        <begin position="117"/>
        <end position="137"/>
    </location>
</feature>
<feature type="transmembrane region" description="Helical" evidence="1">
    <location>
        <begin position="150"/>
        <end position="168"/>
    </location>
</feature>
<feature type="transmembrane region" description="Helical" evidence="1">
    <location>
        <begin position="170"/>
        <end position="190"/>
    </location>
</feature>
<reference key="1">
    <citation type="journal article" date="1999" name="Nature">
        <title>Evidence for lateral gene transfer between Archaea and Bacteria from genome sequence of Thermotoga maritima.</title>
        <authorList>
            <person name="Nelson K.E."/>
            <person name="Clayton R.A."/>
            <person name="Gill S.R."/>
            <person name="Gwinn M.L."/>
            <person name="Dodson R.J."/>
            <person name="Haft D.H."/>
            <person name="Hickey E.K."/>
            <person name="Peterson J.D."/>
            <person name="Nelson W.C."/>
            <person name="Ketchum K.A."/>
            <person name="McDonald L.A."/>
            <person name="Utterback T.R."/>
            <person name="Malek J.A."/>
            <person name="Linher K.D."/>
            <person name="Garrett M.M."/>
            <person name="Stewart A.M."/>
            <person name="Cotton M.D."/>
            <person name="Pratt M.S."/>
            <person name="Phillips C.A."/>
            <person name="Richardson D.L."/>
            <person name="Heidelberg J.F."/>
            <person name="Sutton G.G."/>
            <person name="Fleischmann R.D."/>
            <person name="Eisen J.A."/>
            <person name="White O."/>
            <person name="Salzberg S.L."/>
            <person name="Smith H.O."/>
            <person name="Venter J.C."/>
            <person name="Fraser C.M."/>
        </authorList>
    </citation>
    <scope>NUCLEOTIDE SEQUENCE [LARGE SCALE GENOMIC DNA]</scope>
    <source>
        <strain>ATCC 43589 / DSM 3109 / JCM 10099 / NBRC 100826 / MSB8</strain>
    </source>
</reference>
<keyword id="KW-0997">Cell inner membrane</keyword>
<keyword id="KW-1003">Cell membrane</keyword>
<keyword id="KW-0444">Lipid biosynthesis</keyword>
<keyword id="KW-0443">Lipid metabolism</keyword>
<keyword id="KW-0472">Membrane</keyword>
<keyword id="KW-0594">Phospholipid biosynthesis</keyword>
<keyword id="KW-1208">Phospholipid metabolism</keyword>
<keyword id="KW-1185">Reference proteome</keyword>
<keyword id="KW-0808">Transferase</keyword>
<keyword id="KW-0812">Transmembrane</keyword>
<keyword id="KW-1133">Transmembrane helix</keyword>
<gene>
    <name evidence="1" type="primary">plsY1</name>
    <name type="ordered locus">TM_1283</name>
</gene>
<evidence type="ECO:0000255" key="1">
    <source>
        <dbReference type="HAMAP-Rule" id="MF_01043"/>
    </source>
</evidence>
<sequence>MLNFFLITIQFLSGAVMYSHIIAKIKGIDLRKIRDGNPGSSNLWRAAGWKYGFPALMLDYFKGTFPIAFFVWNESFHVNRYVIAFAALSGILGHAFSPFLKFKGGKAIATTFGAWSVLTKWEGPMVLGTVFTIFSILHRLRGKNKTTPEEDAFRVMIGFAALLIYTMWKVFNGMPELAILYFGNFLIVFYKHRLELRRYLKGV</sequence>